<keyword id="KW-0998">Cell outer membrane</keyword>
<keyword id="KW-0961">Cell wall biogenesis/degradation</keyword>
<keyword id="KW-0456">Lyase</keyword>
<keyword id="KW-0472">Membrane</keyword>
<keyword id="KW-0732">Signal</keyword>
<proteinExistence type="inferred from homology"/>
<comment type="function">
    <text evidence="1">Murein-degrading enzyme that degrades murein glycan strands and insoluble, high-molecular weight murein sacculi, with the concomitant formation of a 1,6-anhydromuramoyl product. Lytic transglycosylases (LTs) play an integral role in the metabolism of the peptidoglycan (PG) sacculus. Their lytic action creates space within the PG sacculus to allow for its expansion as well as for the insertion of various structures such as secretion systems and flagella.</text>
</comment>
<comment type="catalytic activity">
    <reaction evidence="1">
        <text>Exolytic cleavage of the (1-&gt;4)-beta-glycosidic linkage between N-acetylmuramic acid (MurNAc) and N-acetylglucosamine (GlcNAc) residues in peptidoglycan, from either the reducing or the non-reducing ends of the peptidoglycan chains, with concomitant formation of a 1,6-anhydrobond in the MurNAc residue.</text>
        <dbReference type="EC" id="4.2.2.n1"/>
    </reaction>
</comment>
<comment type="subcellular location">
    <subcellularLocation>
        <location>Cell outer membrane</location>
        <topology>Peripheral membrane protein</topology>
    </subcellularLocation>
    <text evidence="1">Attached to the inner leaflet of the outer membrane.</text>
</comment>
<comment type="domain">
    <text evidence="1">The N-terminal domain does not have lytic activity and probably modulates enzymatic activity. The C-terminal domain is the catalytic active domain.</text>
</comment>
<comment type="similarity">
    <text evidence="1">In the N-terminal section; belongs to the bacterial solute-binding protein 3 family.</text>
</comment>
<comment type="similarity">
    <text evidence="1">In the C-terminal section; belongs to the transglycosylase Slt family.</text>
</comment>
<comment type="sequence caution" evidence="3">
    <conflict type="erroneous initiation">
        <sequence resource="EMBL-CDS" id="BAC58928"/>
    </conflict>
</comment>
<dbReference type="EC" id="4.2.2.n1" evidence="1"/>
<dbReference type="EMBL" id="BA000031">
    <property type="protein sequence ID" value="BAC58928.1"/>
    <property type="status" value="ALT_INIT"/>
    <property type="molecule type" value="Genomic_DNA"/>
</dbReference>
<dbReference type="RefSeq" id="NP_797044.1">
    <property type="nucleotide sequence ID" value="NC_004603.1"/>
</dbReference>
<dbReference type="RefSeq" id="WP_005455996.1">
    <property type="nucleotide sequence ID" value="NC_004603.1"/>
</dbReference>
<dbReference type="SMR" id="Q87RW1"/>
<dbReference type="CAZy" id="GH23">
    <property type="family name" value="Glycoside Hydrolase Family 23"/>
</dbReference>
<dbReference type="GeneID" id="1188140"/>
<dbReference type="KEGG" id="vpa:VP0665"/>
<dbReference type="PATRIC" id="fig|223926.6.peg.633"/>
<dbReference type="eggNOG" id="COG4623">
    <property type="taxonomic scope" value="Bacteria"/>
</dbReference>
<dbReference type="HOGENOM" id="CLU_027494_0_1_6"/>
<dbReference type="Proteomes" id="UP000002493">
    <property type="component" value="Chromosome 1"/>
</dbReference>
<dbReference type="GO" id="GO:0009279">
    <property type="term" value="C:cell outer membrane"/>
    <property type="evidence" value="ECO:0007669"/>
    <property type="project" value="UniProtKB-SubCell"/>
</dbReference>
<dbReference type="GO" id="GO:0008933">
    <property type="term" value="F:peptidoglycan lytic transglycosylase activity"/>
    <property type="evidence" value="ECO:0007669"/>
    <property type="project" value="UniProtKB-UniRule"/>
</dbReference>
<dbReference type="GO" id="GO:0016998">
    <property type="term" value="P:cell wall macromolecule catabolic process"/>
    <property type="evidence" value="ECO:0007669"/>
    <property type="project" value="UniProtKB-UniRule"/>
</dbReference>
<dbReference type="GO" id="GO:0071555">
    <property type="term" value="P:cell wall organization"/>
    <property type="evidence" value="ECO:0007669"/>
    <property type="project" value="UniProtKB-KW"/>
</dbReference>
<dbReference type="GO" id="GO:0009253">
    <property type="term" value="P:peptidoglycan catabolic process"/>
    <property type="evidence" value="ECO:0007669"/>
    <property type="project" value="TreeGrafter"/>
</dbReference>
<dbReference type="CDD" id="cd13403">
    <property type="entry name" value="MLTF-like"/>
    <property type="match status" value="1"/>
</dbReference>
<dbReference type="CDD" id="cd01009">
    <property type="entry name" value="PBP2_YfhD_N"/>
    <property type="match status" value="1"/>
</dbReference>
<dbReference type="FunFam" id="1.10.530.10:FF:000003">
    <property type="entry name" value="Membrane-bound lytic murein transglycosylase F"/>
    <property type="match status" value="1"/>
</dbReference>
<dbReference type="Gene3D" id="1.10.530.10">
    <property type="match status" value="1"/>
</dbReference>
<dbReference type="Gene3D" id="3.40.190.10">
    <property type="entry name" value="Periplasmic binding protein-like II"/>
    <property type="match status" value="2"/>
</dbReference>
<dbReference type="HAMAP" id="MF_02016">
    <property type="entry name" value="MltF"/>
    <property type="match status" value="1"/>
</dbReference>
<dbReference type="InterPro" id="IPR023346">
    <property type="entry name" value="Lysozyme-like_dom_sf"/>
</dbReference>
<dbReference type="InterPro" id="IPR023703">
    <property type="entry name" value="MltF"/>
</dbReference>
<dbReference type="InterPro" id="IPR001638">
    <property type="entry name" value="Solute-binding_3/MltF_N"/>
</dbReference>
<dbReference type="InterPro" id="IPR000189">
    <property type="entry name" value="Transglyc_AS"/>
</dbReference>
<dbReference type="InterPro" id="IPR008258">
    <property type="entry name" value="Transglycosylase_SLT_dom_1"/>
</dbReference>
<dbReference type="NCBIfam" id="NF008112">
    <property type="entry name" value="PRK10859.1"/>
    <property type="match status" value="1"/>
</dbReference>
<dbReference type="PANTHER" id="PTHR35936">
    <property type="entry name" value="MEMBRANE-BOUND LYTIC MUREIN TRANSGLYCOSYLASE F"/>
    <property type="match status" value="1"/>
</dbReference>
<dbReference type="PANTHER" id="PTHR35936:SF32">
    <property type="entry name" value="MEMBRANE-BOUND LYTIC MUREIN TRANSGLYCOSYLASE F"/>
    <property type="match status" value="1"/>
</dbReference>
<dbReference type="Pfam" id="PF00497">
    <property type="entry name" value="SBP_bac_3"/>
    <property type="match status" value="1"/>
</dbReference>
<dbReference type="Pfam" id="PF01464">
    <property type="entry name" value="SLT"/>
    <property type="match status" value="1"/>
</dbReference>
<dbReference type="SMART" id="SM00062">
    <property type="entry name" value="PBPb"/>
    <property type="match status" value="1"/>
</dbReference>
<dbReference type="SUPFAM" id="SSF53955">
    <property type="entry name" value="Lysozyme-like"/>
    <property type="match status" value="1"/>
</dbReference>
<dbReference type="SUPFAM" id="SSF53850">
    <property type="entry name" value="Periplasmic binding protein-like II"/>
    <property type="match status" value="1"/>
</dbReference>
<dbReference type="PROSITE" id="PS51257">
    <property type="entry name" value="PROKAR_LIPOPROTEIN"/>
    <property type="match status" value="1"/>
</dbReference>
<dbReference type="PROSITE" id="PS00922">
    <property type="entry name" value="TRANSGLYCOSYLASE"/>
    <property type="match status" value="1"/>
</dbReference>
<feature type="signal peptide" evidence="1">
    <location>
        <begin position="1"/>
        <end position="24"/>
    </location>
</feature>
<feature type="chain" id="PRO_0000353993" description="Membrane-bound lytic murein transglycosylase F">
    <location>
        <begin position="25"/>
        <end position="525"/>
    </location>
</feature>
<feature type="region of interest" description="Non-LT domain" evidence="1">
    <location>
        <begin position="25"/>
        <end position="284"/>
    </location>
</feature>
<feature type="region of interest" description="LT domain" evidence="1">
    <location>
        <begin position="286"/>
        <end position="525"/>
    </location>
</feature>
<feature type="region of interest" description="Disordered" evidence="2">
    <location>
        <begin position="506"/>
        <end position="525"/>
    </location>
</feature>
<feature type="compositionally biased region" description="Acidic residues" evidence="2">
    <location>
        <begin position="514"/>
        <end position="525"/>
    </location>
</feature>
<feature type="active site" evidence="1">
    <location>
        <position position="329"/>
    </location>
</feature>
<accession>Q87RW1</accession>
<sequence length="525" mass="59886">MQIRHFNRLKRSVLLFASVLLLSACQIESQPKSEFEKIQERGVLRVGTLNNQLSYYIGPDGPAGLDYELARKFAEELGVKLEIKPAFRQADLFPALKKGDIDIIATGLNQTSQAVKRFRPGPAYYYVSQQVVYKKGQLRPRDIEQLIEYQASKDSQSEEDVNAGAQTLKIVEQSQYVPTLTALKKQYPELQFEIVGDADTRDLLKHVSTGELRFTVTDSVELSLAQRLYPDLALAFELTEDQPVSWFTRRSEDESLYAMLIEFFGNIKQSGELASLEEKYIGHIEAFDYVDTRAFIRALDDKLPRWAPLFQKYSEEFDWRLIAALAYQESHWKPKAKSPTGVRGMMMLTLPTAKSVGVTDRLNPEQSVRGGVEYLRRIVARVPDTINEHEKIWFALASYNIGYGHMMDARRLTKAQGGDPNAWADVKDRLPLLRQKRYYSQTRYGYARGDEARNYVENIRRYYQSIIGHVSQKPSIDEDTDDLQVIPPLNPELLISGAVETIAEEVSGASDITNEVDEDLDQEEE</sequence>
<protein>
    <recommendedName>
        <fullName evidence="1">Membrane-bound lytic murein transglycosylase F</fullName>
        <ecNumber evidence="1">4.2.2.n1</ecNumber>
    </recommendedName>
    <alternativeName>
        <fullName evidence="1">Murein lyase F</fullName>
    </alternativeName>
</protein>
<evidence type="ECO:0000255" key="1">
    <source>
        <dbReference type="HAMAP-Rule" id="MF_02016"/>
    </source>
</evidence>
<evidence type="ECO:0000256" key="2">
    <source>
        <dbReference type="SAM" id="MobiDB-lite"/>
    </source>
</evidence>
<evidence type="ECO:0000305" key="3"/>
<gene>
    <name evidence="1" type="primary">mltF</name>
    <name type="ordered locus">VP0665</name>
</gene>
<reference key="1">
    <citation type="journal article" date="2003" name="Lancet">
        <title>Genome sequence of Vibrio parahaemolyticus: a pathogenic mechanism distinct from that of V. cholerae.</title>
        <authorList>
            <person name="Makino K."/>
            <person name="Oshima K."/>
            <person name="Kurokawa K."/>
            <person name="Yokoyama K."/>
            <person name="Uda T."/>
            <person name="Tagomori K."/>
            <person name="Iijima Y."/>
            <person name="Najima M."/>
            <person name="Nakano M."/>
            <person name="Yamashita A."/>
            <person name="Kubota Y."/>
            <person name="Kimura S."/>
            <person name="Yasunaga T."/>
            <person name="Honda T."/>
            <person name="Shinagawa H."/>
            <person name="Hattori M."/>
            <person name="Iida T."/>
        </authorList>
    </citation>
    <scope>NUCLEOTIDE SEQUENCE [LARGE SCALE GENOMIC DNA]</scope>
    <source>
        <strain>RIMD 2210633</strain>
    </source>
</reference>
<organism>
    <name type="scientific">Vibrio parahaemolyticus serotype O3:K6 (strain RIMD 2210633)</name>
    <dbReference type="NCBI Taxonomy" id="223926"/>
    <lineage>
        <taxon>Bacteria</taxon>
        <taxon>Pseudomonadati</taxon>
        <taxon>Pseudomonadota</taxon>
        <taxon>Gammaproteobacteria</taxon>
        <taxon>Vibrionales</taxon>
        <taxon>Vibrionaceae</taxon>
        <taxon>Vibrio</taxon>
    </lineage>
</organism>
<name>MLTF_VIBPA</name>